<protein>
    <recommendedName>
        <fullName>ATP-dependent RNA helicase dbp7</fullName>
        <ecNumber>3.6.4.13</ecNumber>
    </recommendedName>
</protein>
<keyword id="KW-0067">ATP-binding</keyword>
<keyword id="KW-0347">Helicase</keyword>
<keyword id="KW-0378">Hydrolase</keyword>
<keyword id="KW-0547">Nucleotide-binding</keyword>
<keyword id="KW-0539">Nucleus</keyword>
<keyword id="KW-1185">Reference proteome</keyword>
<keyword id="KW-0690">Ribosome biogenesis</keyword>
<keyword id="KW-0694">RNA-binding</keyword>
<keyword id="KW-0698">rRNA processing</keyword>
<gene>
    <name type="primary">dbp7</name>
    <name type="ORF">NFIA_076210</name>
</gene>
<reference key="1">
    <citation type="journal article" date="2008" name="PLoS Genet.">
        <title>Genomic islands in the pathogenic filamentous fungus Aspergillus fumigatus.</title>
        <authorList>
            <person name="Fedorova N.D."/>
            <person name="Khaldi N."/>
            <person name="Joardar V.S."/>
            <person name="Maiti R."/>
            <person name="Amedeo P."/>
            <person name="Anderson M.J."/>
            <person name="Crabtree J."/>
            <person name="Silva J.C."/>
            <person name="Badger J.H."/>
            <person name="Albarraq A."/>
            <person name="Angiuoli S."/>
            <person name="Bussey H."/>
            <person name="Bowyer P."/>
            <person name="Cotty P.J."/>
            <person name="Dyer P.S."/>
            <person name="Egan A."/>
            <person name="Galens K."/>
            <person name="Fraser-Liggett C.M."/>
            <person name="Haas B.J."/>
            <person name="Inman J.M."/>
            <person name="Kent R."/>
            <person name="Lemieux S."/>
            <person name="Malavazi I."/>
            <person name="Orvis J."/>
            <person name="Roemer T."/>
            <person name="Ronning C.M."/>
            <person name="Sundaram J.P."/>
            <person name="Sutton G."/>
            <person name="Turner G."/>
            <person name="Venter J.C."/>
            <person name="White O.R."/>
            <person name="Whitty B.R."/>
            <person name="Youngman P."/>
            <person name="Wolfe K.H."/>
            <person name="Goldman G.H."/>
            <person name="Wortman J.R."/>
            <person name="Jiang B."/>
            <person name="Denning D.W."/>
            <person name="Nierman W.C."/>
        </authorList>
    </citation>
    <scope>NUCLEOTIDE SEQUENCE [LARGE SCALE GENOMIC DNA]</scope>
    <source>
        <strain>ATCC 1020 / DSM 3700 / CBS 544.65 / FGSC A1164 / JCM 1740 / NRRL 181 / WB 181</strain>
    </source>
</reference>
<organism>
    <name type="scientific">Neosartorya fischeri (strain ATCC 1020 / DSM 3700 / CBS 544.65 / FGSC A1164 / JCM 1740 / NRRL 181 / WB 181)</name>
    <name type="common">Aspergillus fischerianus</name>
    <dbReference type="NCBI Taxonomy" id="331117"/>
    <lineage>
        <taxon>Eukaryota</taxon>
        <taxon>Fungi</taxon>
        <taxon>Dikarya</taxon>
        <taxon>Ascomycota</taxon>
        <taxon>Pezizomycotina</taxon>
        <taxon>Eurotiomycetes</taxon>
        <taxon>Eurotiomycetidae</taxon>
        <taxon>Eurotiales</taxon>
        <taxon>Aspergillaceae</taxon>
        <taxon>Aspergillus</taxon>
        <taxon>Aspergillus subgen. Fumigati</taxon>
    </lineage>
</organism>
<feature type="chain" id="PRO_0000281709" description="ATP-dependent RNA helicase dbp7">
    <location>
        <begin position="1"/>
        <end position="758"/>
    </location>
</feature>
<feature type="domain" description="Helicase ATP-binding" evidence="2">
    <location>
        <begin position="171"/>
        <end position="372"/>
    </location>
</feature>
<feature type="domain" description="Helicase C-terminal" evidence="3">
    <location>
        <begin position="398"/>
        <end position="603"/>
    </location>
</feature>
<feature type="region of interest" description="Disordered" evidence="4">
    <location>
        <begin position="26"/>
        <end position="99"/>
    </location>
</feature>
<feature type="region of interest" description="Disordered" evidence="4">
    <location>
        <begin position="111"/>
        <end position="130"/>
    </location>
</feature>
<feature type="region of interest" description="Disordered" evidence="4">
    <location>
        <begin position="455"/>
        <end position="483"/>
    </location>
</feature>
<feature type="region of interest" description="Disordered" evidence="4">
    <location>
        <begin position="691"/>
        <end position="758"/>
    </location>
</feature>
<feature type="short sequence motif" description="Q motif">
    <location>
        <begin position="138"/>
        <end position="167"/>
    </location>
</feature>
<feature type="short sequence motif" description="DEAD box">
    <location>
        <begin position="308"/>
        <end position="311"/>
    </location>
</feature>
<feature type="compositionally biased region" description="Basic residues" evidence="4">
    <location>
        <begin position="35"/>
        <end position="45"/>
    </location>
</feature>
<feature type="compositionally biased region" description="Polar residues" evidence="4">
    <location>
        <begin position="84"/>
        <end position="99"/>
    </location>
</feature>
<feature type="compositionally biased region" description="Basic and acidic residues" evidence="4">
    <location>
        <begin position="111"/>
        <end position="127"/>
    </location>
</feature>
<feature type="compositionally biased region" description="Basic and acidic residues" evidence="4">
    <location>
        <begin position="696"/>
        <end position="709"/>
    </location>
</feature>
<feature type="binding site" evidence="2">
    <location>
        <begin position="184"/>
        <end position="191"/>
    </location>
    <ligand>
        <name>ATP</name>
        <dbReference type="ChEBI" id="CHEBI:30616"/>
    </ligand>
</feature>
<name>DBP7_NEOFI</name>
<dbReference type="EC" id="3.6.4.13"/>
<dbReference type="EMBL" id="DS027696">
    <property type="protein sequence ID" value="EAW17691.1"/>
    <property type="molecule type" value="Genomic_DNA"/>
</dbReference>
<dbReference type="RefSeq" id="XP_001259588.1">
    <property type="nucleotide sequence ID" value="XM_001259587.1"/>
</dbReference>
<dbReference type="SMR" id="A1DE84"/>
<dbReference type="STRING" id="331117.A1DE84"/>
<dbReference type="EnsemblFungi" id="EAW17691">
    <property type="protein sequence ID" value="EAW17691"/>
    <property type="gene ID" value="NFIA_076210"/>
</dbReference>
<dbReference type="GeneID" id="4586305"/>
<dbReference type="KEGG" id="nfi:NFIA_076210"/>
<dbReference type="VEuPathDB" id="FungiDB:NFIA_076210"/>
<dbReference type="eggNOG" id="KOG0348">
    <property type="taxonomic scope" value="Eukaryota"/>
</dbReference>
<dbReference type="HOGENOM" id="CLU_003041_26_2_1"/>
<dbReference type="OMA" id="AVHIKAD"/>
<dbReference type="OrthoDB" id="422663at2759"/>
<dbReference type="Proteomes" id="UP000006702">
    <property type="component" value="Unassembled WGS sequence"/>
</dbReference>
<dbReference type="GO" id="GO:0005730">
    <property type="term" value="C:nucleolus"/>
    <property type="evidence" value="ECO:0007669"/>
    <property type="project" value="UniProtKB-SubCell"/>
</dbReference>
<dbReference type="GO" id="GO:0005524">
    <property type="term" value="F:ATP binding"/>
    <property type="evidence" value="ECO:0007669"/>
    <property type="project" value="UniProtKB-KW"/>
</dbReference>
<dbReference type="GO" id="GO:0016887">
    <property type="term" value="F:ATP hydrolysis activity"/>
    <property type="evidence" value="ECO:0007669"/>
    <property type="project" value="RHEA"/>
</dbReference>
<dbReference type="GO" id="GO:0003723">
    <property type="term" value="F:RNA binding"/>
    <property type="evidence" value="ECO:0007669"/>
    <property type="project" value="UniProtKB-KW"/>
</dbReference>
<dbReference type="GO" id="GO:0003724">
    <property type="term" value="F:RNA helicase activity"/>
    <property type="evidence" value="ECO:0007669"/>
    <property type="project" value="UniProtKB-EC"/>
</dbReference>
<dbReference type="GO" id="GO:0000464">
    <property type="term" value="P:endonucleolytic cleavage in ITS1 upstream of 5.8S rRNA from tricistronic rRNA transcript (SSU-rRNA, 5.8S rRNA, LSU-rRNA)"/>
    <property type="evidence" value="ECO:0007669"/>
    <property type="project" value="EnsemblFungi"/>
</dbReference>
<dbReference type="CDD" id="cd17949">
    <property type="entry name" value="DEADc_DDX31"/>
    <property type="match status" value="1"/>
</dbReference>
<dbReference type="CDD" id="cd18787">
    <property type="entry name" value="SF2_C_DEAD"/>
    <property type="match status" value="1"/>
</dbReference>
<dbReference type="Gene3D" id="3.40.50.300">
    <property type="entry name" value="P-loop containing nucleotide triphosphate hydrolases"/>
    <property type="match status" value="2"/>
</dbReference>
<dbReference type="InterPro" id="IPR011545">
    <property type="entry name" value="DEAD/DEAH_box_helicase_dom"/>
</dbReference>
<dbReference type="InterPro" id="IPR014001">
    <property type="entry name" value="Helicase_ATP-bd"/>
</dbReference>
<dbReference type="InterPro" id="IPR001650">
    <property type="entry name" value="Helicase_C-like"/>
</dbReference>
<dbReference type="InterPro" id="IPR027417">
    <property type="entry name" value="P-loop_NTPase"/>
</dbReference>
<dbReference type="InterPro" id="IPR025313">
    <property type="entry name" value="SPB4-like_CTE"/>
</dbReference>
<dbReference type="PANTHER" id="PTHR24031">
    <property type="entry name" value="RNA HELICASE"/>
    <property type="match status" value="1"/>
</dbReference>
<dbReference type="Pfam" id="PF13959">
    <property type="entry name" value="CTE_SPB4"/>
    <property type="match status" value="1"/>
</dbReference>
<dbReference type="Pfam" id="PF00270">
    <property type="entry name" value="DEAD"/>
    <property type="match status" value="1"/>
</dbReference>
<dbReference type="Pfam" id="PF00271">
    <property type="entry name" value="Helicase_C"/>
    <property type="match status" value="1"/>
</dbReference>
<dbReference type="SMART" id="SM00487">
    <property type="entry name" value="DEXDc"/>
    <property type="match status" value="1"/>
</dbReference>
<dbReference type="SMART" id="SM01178">
    <property type="entry name" value="DUF4217"/>
    <property type="match status" value="1"/>
</dbReference>
<dbReference type="SMART" id="SM00490">
    <property type="entry name" value="HELICc"/>
    <property type="match status" value="1"/>
</dbReference>
<dbReference type="SUPFAM" id="SSF52540">
    <property type="entry name" value="P-loop containing nucleoside triphosphate hydrolases"/>
    <property type="match status" value="1"/>
</dbReference>
<dbReference type="PROSITE" id="PS51192">
    <property type="entry name" value="HELICASE_ATP_BIND_1"/>
    <property type="match status" value="1"/>
</dbReference>
<dbReference type="PROSITE" id="PS51194">
    <property type="entry name" value="HELICASE_CTER"/>
    <property type="match status" value="1"/>
</dbReference>
<dbReference type="PROSITE" id="PS51195">
    <property type="entry name" value="Q_MOTIF"/>
    <property type="match status" value="1"/>
</dbReference>
<proteinExistence type="inferred from homology"/>
<accession>A1DE84</accession>
<sequence length="758" mass="83538">MADDGLLLNFSLGDNNIIQPETKLKGGTWRDRLSAKKIAKHHAKGPRTAGDEDSTPRAPRNPNRIEVPSSRPTKRQRTDGGDSGKQQSHTHPHSNQPRQFISSLFTKNPEPQKVEEVKEEGHVEDAKPTNAPLIDGLDTFTNLGLSPSLAAHLLTKLELKAPTAIQKASISQLLKEEGDAFIQAETGSGKTLAYLLPLVQRIMALSKPGAQTDAKGQPIVHRDSGLFAIVLAPTRELCKQISVVLENLLRCAHWIVAGTVIGGEKKKSEKARLRKGLNILVATPGRLADHLDNTQALDVSNVRWLVLDEGDRLMELGFEEEIQGIVKKLDARQRPSRIPGVPTRRTTILCSATLKMSVQKLGEISLKDAVHIKADPEDEDEKARRSKEEESAYRVPAQLKQSYAVVAAKLRLVTLTAFFKRTFMRKGSVMKAIIFVSCADSVDFHFEVFTRKQAKEDGDESSDTDKSEDKPPSSPHGTIAPATAFSNPSNPVTLFRLHGSLPQNVRTSTLGAFAKNKEASVLICTDVASRGLDLPNVDLVVEYDPAFSAEDHLHRIGRTARVGRDGRALIFLQPGCEENYVEVLKRGYRDGGKALTRADANDILKRGFGGNVESGNKDWETKATDWQCEIERWALENPEYLEMARRAFQSHIRAYATHIAAERSMFNIKELHLGHLAKAFALRDRPSKINVPGLRQGKEETKKDFKAERNSAAGKKRKAGGTDLADDIPSANNTATAAQKMRAKMKEHISGANEFNLA</sequence>
<evidence type="ECO:0000250" key="1"/>
<evidence type="ECO:0000255" key="2">
    <source>
        <dbReference type="PROSITE-ProRule" id="PRU00541"/>
    </source>
</evidence>
<evidence type="ECO:0000255" key="3">
    <source>
        <dbReference type="PROSITE-ProRule" id="PRU00542"/>
    </source>
</evidence>
<evidence type="ECO:0000256" key="4">
    <source>
        <dbReference type="SAM" id="MobiDB-lite"/>
    </source>
</evidence>
<evidence type="ECO:0000305" key="5"/>
<comment type="function">
    <text evidence="1">ATP-binding RNA helicase involved in the biogenesis of 60S ribosomal subunits and is required for the normal formation of 25S and 5.8S rRNAs.</text>
</comment>
<comment type="catalytic activity">
    <reaction>
        <text>ATP + H2O = ADP + phosphate + H(+)</text>
        <dbReference type="Rhea" id="RHEA:13065"/>
        <dbReference type="ChEBI" id="CHEBI:15377"/>
        <dbReference type="ChEBI" id="CHEBI:15378"/>
        <dbReference type="ChEBI" id="CHEBI:30616"/>
        <dbReference type="ChEBI" id="CHEBI:43474"/>
        <dbReference type="ChEBI" id="CHEBI:456216"/>
        <dbReference type="EC" id="3.6.4.13"/>
    </reaction>
</comment>
<comment type="subcellular location">
    <subcellularLocation>
        <location evidence="1">Nucleus</location>
        <location evidence="1">Nucleolus</location>
    </subcellularLocation>
</comment>
<comment type="domain">
    <text>The Q motif is unique to and characteristic of the DEAD box family of RNA helicases and controls ATP binding and hydrolysis.</text>
</comment>
<comment type="miscellaneous">
    <text>Present with 1460 molecules/cell in log phase SD medium.</text>
</comment>
<comment type="similarity">
    <text evidence="5">Belongs to the DEAD box helicase family. DDX31/DBP7 subfamily.</text>
</comment>